<accession>Q65LA4</accession>
<accession>Q62WP3</accession>
<evidence type="ECO:0000255" key="1">
    <source>
        <dbReference type="HAMAP-Rule" id="MF_01861"/>
    </source>
</evidence>
<gene>
    <name type="ordered locus">BLi01253</name>
    <name type="ordered locus">BL05110</name>
</gene>
<dbReference type="EMBL" id="CP000002">
    <property type="protein sequence ID" value="AAU22815.1"/>
    <property type="molecule type" value="Genomic_DNA"/>
</dbReference>
<dbReference type="EMBL" id="AE017333">
    <property type="protein sequence ID" value="AAU40160.1"/>
    <property type="molecule type" value="Genomic_DNA"/>
</dbReference>
<dbReference type="RefSeq" id="WP_009328819.1">
    <property type="nucleotide sequence ID" value="NC_006322.1"/>
</dbReference>
<dbReference type="STRING" id="279010.BL05110"/>
<dbReference type="KEGG" id="bld:BLi01253"/>
<dbReference type="KEGG" id="bli:BL05110"/>
<dbReference type="eggNOG" id="ENOG5032YMN">
    <property type="taxonomic scope" value="Bacteria"/>
</dbReference>
<dbReference type="HOGENOM" id="CLU_142282_0_0_9"/>
<dbReference type="Proteomes" id="UP000000606">
    <property type="component" value="Chromosome"/>
</dbReference>
<dbReference type="HAMAP" id="MF_01861">
    <property type="entry name" value="UPF0738"/>
    <property type="match status" value="1"/>
</dbReference>
<dbReference type="InterPro" id="IPR020908">
    <property type="entry name" value="UPF0738"/>
</dbReference>
<dbReference type="Pfam" id="PF19785">
    <property type="entry name" value="UPF0738"/>
    <property type="match status" value="1"/>
</dbReference>
<sequence length="121" mass="13947">MQNRIEITEANLRNDRLVLTSEINDGAERKPAGRMLTDSDHFAFVYILEQDESFEYVILNEGIWSDLKAALDAGLPVFLHIGNTELELNGFHDELGYLIENIKDNANYGEEMEERVKRIFL</sequence>
<name>Y5110_BACLD</name>
<organism>
    <name type="scientific">Bacillus licheniformis (strain ATCC 14580 / DSM 13 / JCM 2505 / CCUG 7422 / NBRC 12200 / NCIMB 9375 / NCTC 10341 / NRRL NRS-1264 / Gibson 46)</name>
    <dbReference type="NCBI Taxonomy" id="279010"/>
    <lineage>
        <taxon>Bacteria</taxon>
        <taxon>Bacillati</taxon>
        <taxon>Bacillota</taxon>
        <taxon>Bacilli</taxon>
        <taxon>Bacillales</taxon>
        <taxon>Bacillaceae</taxon>
        <taxon>Bacillus</taxon>
    </lineage>
</organism>
<keyword id="KW-1185">Reference proteome</keyword>
<proteinExistence type="inferred from homology"/>
<reference key="1">
    <citation type="journal article" date="2004" name="J. Mol. Microbiol. Biotechnol.">
        <title>The complete genome sequence of Bacillus licheniformis DSM13, an organism with great industrial potential.</title>
        <authorList>
            <person name="Veith B."/>
            <person name="Herzberg C."/>
            <person name="Steckel S."/>
            <person name="Feesche J."/>
            <person name="Maurer K.H."/>
            <person name="Ehrenreich P."/>
            <person name="Baeumer S."/>
            <person name="Henne A."/>
            <person name="Liesegang H."/>
            <person name="Merkl R."/>
            <person name="Ehrenreich A."/>
            <person name="Gottschalk G."/>
        </authorList>
    </citation>
    <scope>NUCLEOTIDE SEQUENCE [LARGE SCALE GENOMIC DNA]</scope>
    <source>
        <strain>ATCC 14580 / DSM 13 / JCM 2505 / CCUG 7422 / NBRC 12200 / NCIMB 9375 / NCTC 10341 / NRRL NRS-1264 / Gibson 46</strain>
    </source>
</reference>
<reference key="2">
    <citation type="journal article" date="2004" name="Genome Biol.">
        <title>Complete genome sequence of the industrial bacterium Bacillus licheniformis and comparisons with closely related Bacillus species.</title>
        <authorList>
            <person name="Rey M.W."/>
            <person name="Ramaiya P."/>
            <person name="Nelson B.A."/>
            <person name="Brody-Karpin S.D."/>
            <person name="Zaretsky E.J."/>
            <person name="Tang M."/>
            <person name="Lopez de Leon A."/>
            <person name="Xiang H."/>
            <person name="Gusti V."/>
            <person name="Clausen I.G."/>
            <person name="Olsen P.B."/>
            <person name="Rasmussen M.D."/>
            <person name="Andersen J.T."/>
            <person name="Joergensen P.L."/>
            <person name="Larsen T.S."/>
            <person name="Sorokin A."/>
            <person name="Bolotin A."/>
            <person name="Lapidus A."/>
            <person name="Galleron N."/>
            <person name="Ehrlich S.D."/>
            <person name="Berka R.M."/>
        </authorList>
    </citation>
    <scope>NUCLEOTIDE SEQUENCE [LARGE SCALE GENOMIC DNA]</scope>
    <source>
        <strain>ATCC 14580 / DSM 13 / JCM 2505 / CCUG 7422 / NBRC 12200 / NCIMB 9375 / NCTC 10341 / NRRL NRS-1264 / Gibson 46</strain>
    </source>
</reference>
<feature type="chain" id="PRO_0000369648" description="UPF0738 protein BLi01253/BL05110">
    <location>
        <begin position="1"/>
        <end position="121"/>
    </location>
</feature>
<protein>
    <recommendedName>
        <fullName evidence="1">UPF0738 protein BLi01253/BL05110</fullName>
    </recommendedName>
</protein>
<comment type="similarity">
    <text evidence="1">Belongs to the UPF0738 family.</text>
</comment>